<feature type="chain" id="PRO_1000128961" description="Zinc transporter ZupT">
    <location>
        <begin position="1"/>
        <end position="257"/>
    </location>
</feature>
<feature type="transmembrane region" description="Helical" evidence="1">
    <location>
        <begin position="5"/>
        <end position="25"/>
    </location>
</feature>
<feature type="transmembrane region" description="Helical" evidence="1">
    <location>
        <begin position="32"/>
        <end position="52"/>
    </location>
</feature>
<feature type="transmembrane region" description="Helical" evidence="1">
    <location>
        <begin position="61"/>
        <end position="81"/>
    </location>
</feature>
<feature type="transmembrane region" description="Helical" evidence="1">
    <location>
        <begin position="109"/>
        <end position="129"/>
    </location>
</feature>
<feature type="transmembrane region" description="Helical" evidence="1">
    <location>
        <begin position="137"/>
        <end position="157"/>
    </location>
</feature>
<feature type="transmembrane region" description="Helical" evidence="1">
    <location>
        <begin position="171"/>
        <end position="191"/>
    </location>
</feature>
<feature type="transmembrane region" description="Helical" evidence="1">
    <location>
        <begin position="195"/>
        <end position="215"/>
    </location>
</feature>
<feature type="transmembrane region" description="Helical" evidence="1">
    <location>
        <begin position="236"/>
        <end position="256"/>
    </location>
</feature>
<feature type="binding site" description="M2 metal binding site" evidence="1">
    <location>
        <position position="120"/>
    </location>
    <ligand>
        <name>Fe(2+)</name>
        <dbReference type="ChEBI" id="CHEBI:29033"/>
    </ligand>
</feature>
<feature type="binding site" description="M2 metal binding site" evidence="1">
    <location>
        <position position="123"/>
    </location>
    <ligand>
        <name>Fe(2+)</name>
        <dbReference type="ChEBI" id="CHEBI:29033"/>
    </ligand>
</feature>
<feature type="binding site" description="M1 metal binding site" evidence="1">
    <location>
        <position position="123"/>
    </location>
    <ligand>
        <name>Zn(2+)</name>
        <dbReference type="ChEBI" id="CHEBI:29105"/>
    </ligand>
</feature>
<feature type="binding site" description="M1 metal binding site" evidence="1">
    <location>
        <position position="148"/>
    </location>
    <ligand>
        <name>Zn(2+)</name>
        <dbReference type="ChEBI" id="CHEBI:29105"/>
    </ligand>
</feature>
<feature type="binding site" description="M2 metal binding site" evidence="1">
    <location>
        <position position="149"/>
    </location>
    <ligand>
        <name>Fe(2+)</name>
        <dbReference type="ChEBI" id="CHEBI:29033"/>
    </ligand>
</feature>
<feature type="binding site" description="M2 metal binding site" evidence="1">
    <location>
        <position position="152"/>
    </location>
    <ligand>
        <name>Fe(2+)</name>
        <dbReference type="ChEBI" id="CHEBI:29033"/>
    </ligand>
</feature>
<feature type="binding site" description="M1 metal binding site" evidence="1">
    <location>
        <position position="152"/>
    </location>
    <ligand>
        <name>Zn(2+)</name>
        <dbReference type="ChEBI" id="CHEBI:29105"/>
    </ligand>
</feature>
<feature type="binding site" description="M2 metal binding site" evidence="1">
    <location>
        <position position="181"/>
    </location>
    <ligand>
        <name>Fe(2+)</name>
        <dbReference type="ChEBI" id="CHEBI:29033"/>
    </ligand>
</feature>
<name>ZUPT_SALDC</name>
<dbReference type="EMBL" id="CP001144">
    <property type="protein sequence ID" value="ACH75565.1"/>
    <property type="molecule type" value="Genomic_DNA"/>
</dbReference>
<dbReference type="RefSeq" id="WP_000115874.1">
    <property type="nucleotide sequence ID" value="NC_011205.1"/>
</dbReference>
<dbReference type="SMR" id="B5FV58"/>
<dbReference type="KEGG" id="sed:SeD_A3543"/>
<dbReference type="HOGENOM" id="CLU_015114_1_3_6"/>
<dbReference type="Proteomes" id="UP000008322">
    <property type="component" value="Chromosome"/>
</dbReference>
<dbReference type="GO" id="GO:0005886">
    <property type="term" value="C:plasma membrane"/>
    <property type="evidence" value="ECO:0007669"/>
    <property type="project" value="UniProtKB-SubCell"/>
</dbReference>
<dbReference type="GO" id="GO:0046872">
    <property type="term" value="F:metal ion binding"/>
    <property type="evidence" value="ECO:0007669"/>
    <property type="project" value="UniProtKB-KW"/>
</dbReference>
<dbReference type="GO" id="GO:0005385">
    <property type="term" value="F:zinc ion transmembrane transporter activity"/>
    <property type="evidence" value="ECO:0007669"/>
    <property type="project" value="UniProtKB-UniRule"/>
</dbReference>
<dbReference type="HAMAP" id="MF_00548">
    <property type="entry name" value="ZupT"/>
    <property type="match status" value="1"/>
</dbReference>
<dbReference type="InterPro" id="IPR003689">
    <property type="entry name" value="ZIP"/>
</dbReference>
<dbReference type="InterPro" id="IPR023498">
    <property type="entry name" value="Zn_transptr_ZupT"/>
</dbReference>
<dbReference type="NCBIfam" id="NF003243">
    <property type="entry name" value="PRK04201.1"/>
    <property type="match status" value="1"/>
</dbReference>
<dbReference type="PANTHER" id="PTHR11040:SF205">
    <property type="entry name" value="ZINC TRANSPORTER ZUPT"/>
    <property type="match status" value="1"/>
</dbReference>
<dbReference type="PANTHER" id="PTHR11040">
    <property type="entry name" value="ZINC/IRON TRANSPORTER"/>
    <property type="match status" value="1"/>
</dbReference>
<dbReference type="Pfam" id="PF02535">
    <property type="entry name" value="Zip"/>
    <property type="match status" value="2"/>
</dbReference>
<accession>B5FV58</accession>
<evidence type="ECO:0000255" key="1">
    <source>
        <dbReference type="HAMAP-Rule" id="MF_00548"/>
    </source>
</evidence>
<keyword id="KW-0997">Cell inner membrane</keyword>
<keyword id="KW-1003">Cell membrane</keyword>
<keyword id="KW-0406">Ion transport</keyword>
<keyword id="KW-0408">Iron</keyword>
<keyword id="KW-0472">Membrane</keyword>
<keyword id="KW-0479">Metal-binding</keyword>
<keyword id="KW-0812">Transmembrane</keyword>
<keyword id="KW-1133">Transmembrane helix</keyword>
<keyword id="KW-0813">Transport</keyword>
<keyword id="KW-0862">Zinc</keyword>
<keyword id="KW-0864">Zinc transport</keyword>
<protein>
    <recommendedName>
        <fullName evidence="1">Zinc transporter ZupT</fullName>
    </recommendedName>
</protein>
<sequence>MSVPLILTLLAGAATFIGAFLGVLGQKPSNRVLAFSLGFAAGIMLLISLMEMLPAALDTEGMSPVLGYGMFIIGLLGYFGLDRLLPHAHPQDLVQKRQQPLPGSIKRTAILLTLGISLHNFPEGIATFVTASSNLELGFGIALAVALHNIPEGLAVAGPVYAATGSKRTAIFWAGISGMAEILGGVLAWLILGSLVSPIVMAAIMAAVAGIMVALSVDELMPLAKEIDPNNNPSYGVLCGMSIMGLSLVILQTIGIG</sequence>
<organism>
    <name type="scientific">Salmonella dublin (strain CT_02021853)</name>
    <dbReference type="NCBI Taxonomy" id="439851"/>
    <lineage>
        <taxon>Bacteria</taxon>
        <taxon>Pseudomonadati</taxon>
        <taxon>Pseudomonadota</taxon>
        <taxon>Gammaproteobacteria</taxon>
        <taxon>Enterobacterales</taxon>
        <taxon>Enterobacteriaceae</taxon>
        <taxon>Salmonella</taxon>
    </lineage>
</organism>
<reference key="1">
    <citation type="journal article" date="2011" name="J. Bacteriol.">
        <title>Comparative genomics of 28 Salmonella enterica isolates: evidence for CRISPR-mediated adaptive sublineage evolution.</title>
        <authorList>
            <person name="Fricke W.F."/>
            <person name="Mammel M.K."/>
            <person name="McDermott P.F."/>
            <person name="Tartera C."/>
            <person name="White D.G."/>
            <person name="Leclerc J.E."/>
            <person name="Ravel J."/>
            <person name="Cebula T.A."/>
        </authorList>
    </citation>
    <scope>NUCLEOTIDE SEQUENCE [LARGE SCALE GENOMIC DNA]</scope>
    <source>
        <strain>CT_02021853</strain>
    </source>
</reference>
<gene>
    <name evidence="1" type="primary">zupT</name>
    <name type="ordered locus">SeD_A3543</name>
</gene>
<comment type="function">
    <text evidence="1">Mediates zinc uptake. May also transport other divalent cations.</text>
</comment>
<comment type="catalytic activity">
    <reaction evidence="1">
        <text>Zn(2+)(in) = Zn(2+)(out)</text>
        <dbReference type="Rhea" id="RHEA:29351"/>
        <dbReference type="ChEBI" id="CHEBI:29105"/>
    </reaction>
</comment>
<comment type="subcellular location">
    <subcellularLocation>
        <location evidence="1">Cell inner membrane</location>
        <topology evidence="1">Multi-pass membrane protein</topology>
    </subcellularLocation>
</comment>
<comment type="similarity">
    <text evidence="1">Belongs to the ZIP transporter (TC 2.A.5) family. ZupT subfamily.</text>
</comment>
<proteinExistence type="inferred from homology"/>